<name>HIS7_BAUCH</name>
<accession>Q1LT69</accession>
<sequence length="356" mass="40624">MSKKVLFIDRDGTLINEPLDNFQIDRIEKLVLEPYVINALLILQQANFQLVMVSNQDGLGTSSFPQEDFDRPHNLMMQIFKSQNIFFDQVLICPHLAKDKCHCRKPGIALVAPWLVGNKIDRTKSYVIGDRETDIKLAYNMGINSLRYNRNTMNWQAICNYLTSLNRYAHVKRITKETSINVEVWLDREAPSKINTGINFFDHMLEQIATHSGLCMTIEVKGDLYIDDHHTIEDTAIALGTALKQGLGDKHGINRFGFLLPMDECLARCVIDLSGRPFLEYTAEYSYQKVGDMSTEMVEHFFRSLSYAMACTLYLKTEGKNDHHRVESLFKVFGRALRQAICVESNVLPSSKGVLS</sequence>
<protein>
    <recommendedName>
        <fullName evidence="1">Histidine biosynthesis bifunctional protein HisB</fullName>
    </recommendedName>
    <domain>
        <recommendedName>
            <fullName evidence="1">Histidinol-phosphatase</fullName>
            <ecNumber evidence="1">3.1.3.15</ecNumber>
        </recommendedName>
    </domain>
    <domain>
        <recommendedName>
            <fullName evidence="1">Imidazoleglycerol-phosphate dehydratase</fullName>
            <shortName evidence="1">IGPD</shortName>
            <ecNumber evidence="1">4.2.1.19</ecNumber>
        </recommendedName>
    </domain>
</protein>
<proteinExistence type="inferred from homology"/>
<keyword id="KW-0028">Amino-acid biosynthesis</keyword>
<keyword id="KW-0963">Cytoplasm</keyword>
<keyword id="KW-0368">Histidine biosynthesis</keyword>
<keyword id="KW-0378">Hydrolase</keyword>
<keyword id="KW-0456">Lyase</keyword>
<keyword id="KW-0460">Magnesium</keyword>
<keyword id="KW-0479">Metal-binding</keyword>
<keyword id="KW-0511">Multifunctional enzyme</keyword>
<keyword id="KW-1185">Reference proteome</keyword>
<keyword id="KW-0862">Zinc</keyword>
<gene>
    <name evidence="1" type="primary">hisB</name>
    <name type="ordered locus">BCI_0402</name>
</gene>
<reference key="1">
    <citation type="journal article" date="2006" name="PLoS Biol.">
        <title>Metabolic complementarity and genomics of the dual bacterial symbiosis of sharpshooters.</title>
        <authorList>
            <person name="Wu D."/>
            <person name="Daugherty S.C."/>
            <person name="Van Aken S.E."/>
            <person name="Pai G.H."/>
            <person name="Watkins K.L."/>
            <person name="Khouri H."/>
            <person name="Tallon L.J."/>
            <person name="Zaborsky J.M."/>
            <person name="Dunbar H.E."/>
            <person name="Tran P.L."/>
            <person name="Moran N.A."/>
            <person name="Eisen J.A."/>
        </authorList>
    </citation>
    <scope>NUCLEOTIDE SEQUENCE [LARGE SCALE GENOMIC DNA]</scope>
</reference>
<organism>
    <name type="scientific">Baumannia cicadellinicola subsp. Homalodisca coagulata</name>
    <dbReference type="NCBI Taxonomy" id="374463"/>
    <lineage>
        <taxon>Bacteria</taxon>
        <taxon>Pseudomonadati</taxon>
        <taxon>Pseudomonadota</taxon>
        <taxon>Gammaproteobacteria</taxon>
        <taxon>Candidatus Palibaumannia</taxon>
    </lineage>
</organism>
<dbReference type="EC" id="3.1.3.15" evidence="1"/>
<dbReference type="EC" id="4.2.1.19" evidence="1"/>
<dbReference type="EMBL" id="CP000238">
    <property type="protein sequence ID" value="ABF13797.1"/>
    <property type="molecule type" value="Genomic_DNA"/>
</dbReference>
<dbReference type="RefSeq" id="WP_011520578.1">
    <property type="nucleotide sequence ID" value="NC_007984.1"/>
</dbReference>
<dbReference type="SMR" id="Q1LT69"/>
<dbReference type="STRING" id="374463.BCI_0402"/>
<dbReference type="KEGG" id="bci:BCI_0402"/>
<dbReference type="HOGENOM" id="CLU_044308_0_0_6"/>
<dbReference type="OrthoDB" id="9790411at2"/>
<dbReference type="UniPathway" id="UPA00031">
    <property type="reaction ID" value="UER00011"/>
</dbReference>
<dbReference type="UniPathway" id="UPA00031">
    <property type="reaction ID" value="UER00013"/>
</dbReference>
<dbReference type="Proteomes" id="UP000002427">
    <property type="component" value="Chromosome"/>
</dbReference>
<dbReference type="GO" id="GO:0005737">
    <property type="term" value="C:cytoplasm"/>
    <property type="evidence" value="ECO:0007669"/>
    <property type="project" value="UniProtKB-SubCell"/>
</dbReference>
<dbReference type="GO" id="GO:0004401">
    <property type="term" value="F:histidinol-phosphatase activity"/>
    <property type="evidence" value="ECO:0007669"/>
    <property type="project" value="UniProtKB-UniRule"/>
</dbReference>
<dbReference type="GO" id="GO:0004424">
    <property type="term" value="F:imidazoleglycerol-phosphate dehydratase activity"/>
    <property type="evidence" value="ECO:0007669"/>
    <property type="project" value="UniProtKB-UniRule"/>
</dbReference>
<dbReference type="GO" id="GO:0046872">
    <property type="term" value="F:metal ion binding"/>
    <property type="evidence" value="ECO:0007669"/>
    <property type="project" value="UniProtKB-KW"/>
</dbReference>
<dbReference type="GO" id="GO:0000105">
    <property type="term" value="P:L-histidine biosynthetic process"/>
    <property type="evidence" value="ECO:0007669"/>
    <property type="project" value="UniProtKB-UniRule"/>
</dbReference>
<dbReference type="CDD" id="cd07914">
    <property type="entry name" value="IGPD"/>
    <property type="match status" value="1"/>
</dbReference>
<dbReference type="FunFam" id="3.40.50.1000:FF:000061">
    <property type="entry name" value="Histidine biosynthesis bifunctional protein HisB"/>
    <property type="match status" value="1"/>
</dbReference>
<dbReference type="FunFam" id="3.30.230.40:FF:000001">
    <property type="entry name" value="Imidazoleglycerol-phosphate dehydratase HisB"/>
    <property type="match status" value="1"/>
</dbReference>
<dbReference type="FunFam" id="3.30.230.40:FF:000003">
    <property type="entry name" value="Imidazoleglycerol-phosphate dehydratase HisB"/>
    <property type="match status" value="1"/>
</dbReference>
<dbReference type="Gene3D" id="3.40.50.1000">
    <property type="entry name" value="HAD superfamily/HAD-like"/>
    <property type="match status" value="1"/>
</dbReference>
<dbReference type="Gene3D" id="3.30.230.40">
    <property type="entry name" value="Imidazole glycerol phosphate dehydratase, domain 1"/>
    <property type="match status" value="2"/>
</dbReference>
<dbReference type="HAMAP" id="MF_01022">
    <property type="entry name" value="Bifunc_HisB"/>
    <property type="match status" value="1"/>
</dbReference>
<dbReference type="HAMAP" id="MF_00076">
    <property type="entry name" value="HisB"/>
    <property type="match status" value="1"/>
</dbReference>
<dbReference type="InterPro" id="IPR036412">
    <property type="entry name" value="HAD-like_sf"/>
</dbReference>
<dbReference type="InterPro" id="IPR006549">
    <property type="entry name" value="HAD-SF_hydro_IIIA"/>
</dbReference>
<dbReference type="InterPro" id="IPR023214">
    <property type="entry name" value="HAD_sf"/>
</dbReference>
<dbReference type="InterPro" id="IPR020566">
    <property type="entry name" value="His_synth_bifunc_HisB"/>
</dbReference>
<dbReference type="InterPro" id="IPR005954">
    <property type="entry name" value="HisB_N"/>
</dbReference>
<dbReference type="InterPro" id="IPR006543">
    <property type="entry name" value="Histidinol-phos"/>
</dbReference>
<dbReference type="InterPro" id="IPR038494">
    <property type="entry name" value="IGPD_sf"/>
</dbReference>
<dbReference type="InterPro" id="IPR000807">
    <property type="entry name" value="ImidazoleglycerolP_deHydtase"/>
</dbReference>
<dbReference type="InterPro" id="IPR020565">
    <property type="entry name" value="ImidazoleglycerP_deHydtase_CS"/>
</dbReference>
<dbReference type="InterPro" id="IPR020568">
    <property type="entry name" value="Ribosomal_Su5_D2-typ_SF"/>
</dbReference>
<dbReference type="NCBIfam" id="TIGR01662">
    <property type="entry name" value="HAD-SF-IIIA"/>
    <property type="match status" value="1"/>
</dbReference>
<dbReference type="NCBIfam" id="TIGR01261">
    <property type="entry name" value="hisB_Nterm"/>
    <property type="match status" value="1"/>
</dbReference>
<dbReference type="NCBIfam" id="TIGR01656">
    <property type="entry name" value="Histidinol-ppas"/>
    <property type="match status" value="1"/>
</dbReference>
<dbReference type="NCBIfam" id="NF002111">
    <property type="entry name" value="PRK00951.2-1"/>
    <property type="match status" value="1"/>
</dbReference>
<dbReference type="NCBIfam" id="NF003937">
    <property type="entry name" value="PRK05446.1"/>
    <property type="match status" value="1"/>
</dbReference>
<dbReference type="PANTHER" id="PTHR23133:SF2">
    <property type="entry name" value="IMIDAZOLEGLYCEROL-PHOSPHATE DEHYDRATASE"/>
    <property type="match status" value="1"/>
</dbReference>
<dbReference type="PANTHER" id="PTHR23133">
    <property type="entry name" value="IMIDAZOLEGLYCEROL-PHOSPHATE DEHYDRATASE HIS7"/>
    <property type="match status" value="1"/>
</dbReference>
<dbReference type="Pfam" id="PF13242">
    <property type="entry name" value="Hydrolase_like"/>
    <property type="match status" value="1"/>
</dbReference>
<dbReference type="Pfam" id="PF00475">
    <property type="entry name" value="IGPD"/>
    <property type="match status" value="1"/>
</dbReference>
<dbReference type="SUPFAM" id="SSF56784">
    <property type="entry name" value="HAD-like"/>
    <property type="match status" value="1"/>
</dbReference>
<dbReference type="SUPFAM" id="SSF54211">
    <property type="entry name" value="Ribosomal protein S5 domain 2-like"/>
    <property type="match status" value="2"/>
</dbReference>
<dbReference type="PROSITE" id="PS00954">
    <property type="entry name" value="IGP_DEHYDRATASE_1"/>
    <property type="match status" value="1"/>
</dbReference>
<dbReference type="PROSITE" id="PS00955">
    <property type="entry name" value="IGP_DEHYDRATASE_2"/>
    <property type="match status" value="1"/>
</dbReference>
<feature type="chain" id="PRO_1000063441" description="Histidine biosynthesis bifunctional protein HisB">
    <location>
        <begin position="1"/>
        <end position="356"/>
    </location>
</feature>
<feature type="region of interest" description="Histidinol-phosphatase" evidence="1">
    <location>
        <begin position="1"/>
        <end position="166"/>
    </location>
</feature>
<feature type="region of interest" description="Imidazoleglycerol-phosphate dehydratase" evidence="1">
    <location>
        <begin position="167"/>
        <end position="356"/>
    </location>
</feature>
<feature type="active site" description="Nucleophile" evidence="1">
    <location>
        <position position="9"/>
    </location>
</feature>
<feature type="active site" description="Proton donor" evidence="1">
    <location>
        <position position="11"/>
    </location>
</feature>
<feature type="binding site" evidence="1">
    <location>
        <position position="9"/>
    </location>
    <ligand>
        <name>Mg(2+)</name>
        <dbReference type="ChEBI" id="CHEBI:18420"/>
    </ligand>
</feature>
<feature type="binding site" evidence="1">
    <location>
        <position position="11"/>
    </location>
    <ligand>
        <name>Mg(2+)</name>
        <dbReference type="ChEBI" id="CHEBI:18420"/>
    </ligand>
</feature>
<feature type="binding site" evidence="1">
    <location>
        <position position="93"/>
    </location>
    <ligand>
        <name>Zn(2+)</name>
        <dbReference type="ChEBI" id="CHEBI:29105"/>
    </ligand>
</feature>
<feature type="binding site" evidence="1">
    <location>
        <position position="95"/>
    </location>
    <ligand>
        <name>Zn(2+)</name>
        <dbReference type="ChEBI" id="CHEBI:29105"/>
    </ligand>
</feature>
<feature type="binding site" evidence="1">
    <location>
        <position position="101"/>
    </location>
    <ligand>
        <name>Zn(2+)</name>
        <dbReference type="ChEBI" id="CHEBI:29105"/>
    </ligand>
</feature>
<feature type="binding site" evidence="1">
    <location>
        <position position="103"/>
    </location>
    <ligand>
        <name>Zn(2+)</name>
        <dbReference type="ChEBI" id="CHEBI:29105"/>
    </ligand>
</feature>
<feature type="binding site" evidence="1">
    <location>
        <position position="130"/>
    </location>
    <ligand>
        <name>Mg(2+)</name>
        <dbReference type="ChEBI" id="CHEBI:18420"/>
    </ligand>
</feature>
<evidence type="ECO:0000255" key="1">
    <source>
        <dbReference type="HAMAP-Rule" id="MF_01022"/>
    </source>
</evidence>
<comment type="catalytic activity">
    <reaction evidence="1">
        <text>D-erythro-1-(imidazol-4-yl)glycerol 3-phosphate = 3-(imidazol-4-yl)-2-oxopropyl phosphate + H2O</text>
        <dbReference type="Rhea" id="RHEA:11040"/>
        <dbReference type="ChEBI" id="CHEBI:15377"/>
        <dbReference type="ChEBI" id="CHEBI:57766"/>
        <dbReference type="ChEBI" id="CHEBI:58278"/>
        <dbReference type="EC" id="4.2.1.19"/>
    </reaction>
</comment>
<comment type="catalytic activity">
    <reaction evidence="1">
        <text>L-histidinol phosphate + H2O = L-histidinol + phosphate</text>
        <dbReference type="Rhea" id="RHEA:14465"/>
        <dbReference type="ChEBI" id="CHEBI:15377"/>
        <dbReference type="ChEBI" id="CHEBI:43474"/>
        <dbReference type="ChEBI" id="CHEBI:57699"/>
        <dbReference type="ChEBI" id="CHEBI:57980"/>
        <dbReference type="EC" id="3.1.3.15"/>
    </reaction>
</comment>
<comment type="cofactor">
    <cofactor evidence="1">
        <name>Mg(2+)</name>
        <dbReference type="ChEBI" id="CHEBI:18420"/>
    </cofactor>
</comment>
<comment type="cofactor">
    <cofactor evidence="1">
        <name>Zn(2+)</name>
        <dbReference type="ChEBI" id="CHEBI:29105"/>
    </cofactor>
</comment>
<comment type="pathway">
    <text evidence="1">Amino-acid biosynthesis; L-histidine biosynthesis; L-histidine from 5-phospho-alpha-D-ribose 1-diphosphate: step 6/9.</text>
</comment>
<comment type="pathway">
    <text evidence="1">Amino-acid biosynthesis; L-histidine biosynthesis; L-histidine from 5-phospho-alpha-D-ribose 1-diphosphate: step 8/9.</text>
</comment>
<comment type="subcellular location">
    <subcellularLocation>
        <location evidence="1">Cytoplasm</location>
    </subcellularLocation>
</comment>
<comment type="similarity">
    <text evidence="1">In the N-terminal section; belongs to the histidinol-phosphatase family.</text>
</comment>
<comment type="similarity">
    <text evidence="1">In the C-terminal section; belongs to the imidazoleglycerol-phosphate dehydratase family.</text>
</comment>